<protein>
    <recommendedName>
        <fullName evidence="7">Ribose import permease protein RbsC</fullName>
    </recommendedName>
</protein>
<organism>
    <name type="scientific">Escherichia coli (strain K12)</name>
    <dbReference type="NCBI Taxonomy" id="83333"/>
    <lineage>
        <taxon>Bacteria</taxon>
        <taxon>Pseudomonadati</taxon>
        <taxon>Pseudomonadota</taxon>
        <taxon>Gammaproteobacteria</taxon>
        <taxon>Enterobacterales</taxon>
        <taxon>Enterobacteriaceae</taxon>
        <taxon>Escherichia</taxon>
    </lineage>
</organism>
<gene>
    <name evidence="6" type="primary">rbsC</name>
    <name type="ordered locus">b3750</name>
    <name type="ordered locus">JW3729</name>
</gene>
<feature type="chain" id="PRO_0000060223" description="Ribose import permease protein RbsC">
    <location>
        <begin position="1"/>
        <end position="321"/>
    </location>
</feature>
<feature type="topological domain" description="Cytoplasmic" evidence="5">
    <location>
        <begin position="1"/>
        <end position="22"/>
    </location>
</feature>
<feature type="transmembrane region" description="Helical" evidence="8">
    <location>
        <begin position="23"/>
        <end position="43"/>
    </location>
</feature>
<feature type="topological domain" description="Periplasmic" evidence="5">
    <location>
        <begin position="44"/>
        <end position="56"/>
    </location>
</feature>
<feature type="transmembrane region" description="Helical" evidence="8">
    <location>
        <begin position="57"/>
        <end position="77"/>
    </location>
</feature>
<feature type="topological domain" description="Cytoplasmic" evidence="5">
    <location>
        <begin position="78"/>
        <end position="125"/>
    </location>
</feature>
<feature type="transmembrane region" description="Helical" evidence="8">
    <location>
        <begin position="126"/>
        <end position="145"/>
    </location>
</feature>
<feature type="topological domain" description="Periplasmic" evidence="5">
    <location>
        <begin position="146"/>
        <end position="168"/>
    </location>
</feature>
<feature type="transmembrane region" description="Helical" evidence="8">
    <location>
        <begin position="169"/>
        <end position="190"/>
    </location>
</feature>
<feature type="topological domain" description="Cytoplasmic" evidence="5">
    <location>
        <begin position="191"/>
        <end position="220"/>
    </location>
</feature>
<feature type="transmembrane region" description="Helical" evidence="8">
    <location>
        <begin position="221"/>
        <end position="240"/>
    </location>
</feature>
<feature type="topological domain" description="Periplasmic" evidence="5">
    <location>
        <begin position="241"/>
        <end position="294"/>
    </location>
</feature>
<feature type="transmembrane region" description="Helical" evidence="8">
    <location>
        <begin position="295"/>
        <end position="316"/>
    </location>
</feature>
<feature type="topological domain" description="Cytoplasmic" evidence="1 5">
    <location>
        <begin position="317"/>
        <end position="321"/>
    </location>
</feature>
<feature type="sequence conflict" description="In Ref. 1; AAA51474." evidence="7" ref="1">
    <original>L</original>
    <variation>V</variation>
    <location>
        <position position="202"/>
    </location>
</feature>
<dbReference type="EMBL" id="M13169">
    <property type="protein sequence ID" value="AAA51474.1"/>
    <property type="molecule type" value="Genomic_DNA"/>
</dbReference>
<dbReference type="EMBL" id="L10328">
    <property type="protein sequence ID" value="AAA62103.1"/>
    <property type="molecule type" value="Genomic_DNA"/>
</dbReference>
<dbReference type="EMBL" id="U00096">
    <property type="protein sequence ID" value="AAC76773.1"/>
    <property type="molecule type" value="Genomic_DNA"/>
</dbReference>
<dbReference type="EMBL" id="AP009048">
    <property type="protein sequence ID" value="BAE77538.1"/>
    <property type="molecule type" value="Genomic_DNA"/>
</dbReference>
<dbReference type="PIR" id="G65178">
    <property type="entry name" value="G65178"/>
</dbReference>
<dbReference type="RefSeq" id="NP_418206.1">
    <property type="nucleotide sequence ID" value="NC_000913.3"/>
</dbReference>
<dbReference type="RefSeq" id="WP_000211858.1">
    <property type="nucleotide sequence ID" value="NZ_STEB01000015.1"/>
</dbReference>
<dbReference type="BioGRID" id="4263450">
    <property type="interactions" value="34"/>
</dbReference>
<dbReference type="ComplexPortal" id="CPX-4284">
    <property type="entry name" value="RbsABC ribose ABC transporter"/>
</dbReference>
<dbReference type="FunCoup" id="P0AGI1">
    <property type="interactions" value="312"/>
</dbReference>
<dbReference type="IntAct" id="P0AGI1">
    <property type="interactions" value="2"/>
</dbReference>
<dbReference type="STRING" id="511145.b3750"/>
<dbReference type="TCDB" id="3.A.1.2.1">
    <property type="family name" value="the atp-binding cassette (abc) superfamily"/>
</dbReference>
<dbReference type="jPOST" id="P0AGI1"/>
<dbReference type="PaxDb" id="511145-b3750"/>
<dbReference type="EnsemblBacteria" id="AAC76773">
    <property type="protein sequence ID" value="AAC76773"/>
    <property type="gene ID" value="b3750"/>
</dbReference>
<dbReference type="GeneID" id="93778199"/>
<dbReference type="GeneID" id="948262"/>
<dbReference type="KEGG" id="ecj:JW3729"/>
<dbReference type="KEGG" id="eco:b3750"/>
<dbReference type="KEGG" id="ecoc:C3026_20315"/>
<dbReference type="PATRIC" id="fig|1411691.4.peg.2950"/>
<dbReference type="EchoBASE" id="EB0809"/>
<dbReference type="eggNOG" id="COG1172">
    <property type="taxonomic scope" value="Bacteria"/>
</dbReference>
<dbReference type="HOGENOM" id="CLU_028880_2_2_6"/>
<dbReference type="InParanoid" id="P0AGI1"/>
<dbReference type="OMA" id="SFYQMVV"/>
<dbReference type="OrthoDB" id="8843934at2"/>
<dbReference type="PhylomeDB" id="P0AGI1"/>
<dbReference type="BioCyc" id="EcoCyc:RBSC-MONOMER"/>
<dbReference type="BioCyc" id="MetaCyc:RBSC-MONOMER"/>
<dbReference type="PRO" id="PR:P0AGI1"/>
<dbReference type="Proteomes" id="UP000000625">
    <property type="component" value="Chromosome"/>
</dbReference>
<dbReference type="GO" id="GO:0043190">
    <property type="term" value="C:ATP-binding cassette (ABC) transporter complex"/>
    <property type="evidence" value="ECO:0000314"/>
    <property type="project" value="EcoCyc"/>
</dbReference>
<dbReference type="GO" id="GO:0055052">
    <property type="term" value="C:ATP-binding cassette (ABC) transporter complex, substrate-binding subunit-containing"/>
    <property type="evidence" value="ECO:0000353"/>
    <property type="project" value="ComplexPortal"/>
</dbReference>
<dbReference type="GO" id="GO:0016020">
    <property type="term" value="C:membrane"/>
    <property type="evidence" value="ECO:0000314"/>
    <property type="project" value="ComplexPortal"/>
</dbReference>
<dbReference type="GO" id="GO:0005886">
    <property type="term" value="C:plasma membrane"/>
    <property type="evidence" value="ECO:0000314"/>
    <property type="project" value="EcoCyc"/>
</dbReference>
<dbReference type="GO" id="GO:0015591">
    <property type="term" value="F:D-ribose transmembrane transporter activity"/>
    <property type="evidence" value="ECO:0000314"/>
    <property type="project" value="EcoCyc"/>
</dbReference>
<dbReference type="GO" id="GO:0015752">
    <property type="term" value="P:D-ribose transmembrane transport"/>
    <property type="evidence" value="ECO:0000314"/>
    <property type="project" value="ComplexPortal"/>
</dbReference>
<dbReference type="CDD" id="cd06579">
    <property type="entry name" value="TM_PBP1_transp_AraH_like"/>
    <property type="match status" value="1"/>
</dbReference>
<dbReference type="InterPro" id="IPR001851">
    <property type="entry name" value="ABC_transp_permease"/>
</dbReference>
<dbReference type="NCBIfam" id="NF007067">
    <property type="entry name" value="PRK09512.1"/>
    <property type="match status" value="1"/>
</dbReference>
<dbReference type="PANTHER" id="PTHR32196:SF21">
    <property type="entry name" value="ABC TRANSPORTER PERMEASE PROTEIN YPHD-RELATED"/>
    <property type="match status" value="1"/>
</dbReference>
<dbReference type="PANTHER" id="PTHR32196">
    <property type="entry name" value="ABC TRANSPORTER PERMEASE PROTEIN YPHD-RELATED-RELATED"/>
    <property type="match status" value="1"/>
</dbReference>
<dbReference type="Pfam" id="PF02653">
    <property type="entry name" value="BPD_transp_2"/>
    <property type="match status" value="1"/>
</dbReference>
<proteinExistence type="evidence at protein level"/>
<name>RBSC_ECOLI</name>
<evidence type="ECO:0000269" key="1">
    <source>
    </source>
</evidence>
<evidence type="ECO:0000269" key="2">
    <source>
    </source>
</evidence>
<evidence type="ECO:0000269" key="3">
    <source>
    </source>
</evidence>
<evidence type="ECO:0000269" key="4">
    <source>
    </source>
</evidence>
<evidence type="ECO:0000269" key="5">
    <source>
    </source>
</evidence>
<evidence type="ECO:0000303" key="6">
    <source>
    </source>
</evidence>
<evidence type="ECO:0000305" key="7"/>
<evidence type="ECO:0000305" key="8">
    <source>
    </source>
</evidence>
<comment type="function">
    <text evidence="2 4">Part of the ABC transporter complex RbsABC involved in ribose import. Probably responsible for the translocation of the substrate across the membrane.</text>
</comment>
<comment type="function">
    <text evidence="3">(Microbial infection) Probably transports the toxic C-terminal region of CdiA from D.dadantii strain 3937 across the inner membrane to the cytoplasm, where CdiA has a toxic effect. Toxin transport is strain-specific, mutations in this gene do not confer resistance to several other tested CdiA toxins.</text>
</comment>
<comment type="subunit">
    <text evidence="2">The complex is composed of an ATP-binding protein (RbsA), two transmembrane proteins (RbsC) and a solute-binding protein (RbsB).</text>
</comment>
<comment type="interaction">
    <interactant intactId="EBI-21444614">
        <id>P0AGI1</id>
    </interactant>
    <interactant intactId="EBI-1132449">
        <id>P04983</id>
        <label>rbsA</label>
    </interactant>
    <organismsDiffer>false</organismsDiffer>
    <experiments>5</experiments>
</comment>
<comment type="interaction">
    <interactant intactId="EBI-21444614">
        <id>P0AGI1</id>
    </interactant>
    <interactant intactId="EBI-369930">
        <id>P02925</id>
        <label>rbsB</label>
    </interactant>
    <organismsDiffer>false</organismsDiffer>
    <experiments>6</experiments>
</comment>
<comment type="subcellular location">
    <subcellularLocation>
        <location evidence="1 5">Cell inner membrane</location>
        <topology evidence="8">Multi-pass membrane protein</topology>
    </subcellularLocation>
</comment>
<comment type="disruption phenotype">
    <text evidence="3">Disruption confers resistance to cellular contact-dependent growth inhibition (CDI) CdiA of D.dadantii strain 3937, but not to several other tested CdiA toxins.</text>
</comment>
<comment type="similarity">
    <text evidence="7">Belongs to the binding-protein-dependent transport system permease family. AraH/RbsC subfamily.</text>
</comment>
<sequence>MTTQTVSGRRYFTKAWLMEQKSLIALLVLIAIVSTLSPNFFTINNLFNILQQTSVNAIMAVGMTLVILTSGIDLSVGSLLALTGAVAASIVGIEVNALVAVAAALALGAAIGAVTGVIVAKGRVQAFIATLVMMLLLRGVTMVYTNGSPVNTGFTENADLFGWFGIGRPLGVPTPVWIMGIVFLAAWYMLHHTRLGRYIYALGGNEAATRLSGINVNKIKIIVYSLCGLLASLAGIIEVARLSSAQPTAGTGYELDAIAAVVLGGTSLAGGKGRIVGTLIGALILGFLNNGLNLLGVSSYYQMIVKAVVILLAVLVDNKKQ</sequence>
<accession>P0AGI1</accession>
<accession>P04984</accession>
<accession>Q2M868</accession>
<keyword id="KW-0997">Cell inner membrane</keyword>
<keyword id="KW-1003">Cell membrane</keyword>
<keyword id="KW-0472">Membrane</keyword>
<keyword id="KW-1185">Reference proteome</keyword>
<keyword id="KW-0762">Sugar transport</keyword>
<keyword id="KW-0812">Transmembrane</keyword>
<keyword id="KW-1133">Transmembrane helix</keyword>
<keyword id="KW-0813">Transport</keyword>
<reference key="1">
    <citation type="journal article" date="1986" name="J. Biol. Chem.">
        <title>The nucleotide sequences of the rbsD, rbsA, and rbsC genes of Escherichia coli K12.</title>
        <authorList>
            <person name="Bell A.W."/>
            <person name="Buckel S.D."/>
            <person name="Groarke J.M."/>
            <person name="Hope J.N."/>
            <person name="Kingsley D.H."/>
            <person name="Hermodson M.A."/>
        </authorList>
    </citation>
    <scope>NUCLEOTIDE SEQUENCE [GENOMIC DNA]</scope>
    <source>
        <strain>K12</strain>
    </source>
</reference>
<reference key="2">
    <citation type="journal article" date="1993" name="Genomics">
        <title>DNA sequence and analysis of 136 kilobases of the Escherichia coli genome: organizational symmetry around the origin of replication.</title>
        <authorList>
            <person name="Burland V.D."/>
            <person name="Plunkett G. III"/>
            <person name="Daniels D.L."/>
            <person name="Blattner F.R."/>
        </authorList>
    </citation>
    <scope>NUCLEOTIDE SEQUENCE [LARGE SCALE GENOMIC DNA]</scope>
    <source>
        <strain>K12 / MG1655 / ATCC 47076</strain>
    </source>
</reference>
<reference key="3">
    <citation type="journal article" date="1997" name="Science">
        <title>The complete genome sequence of Escherichia coli K-12.</title>
        <authorList>
            <person name="Blattner F.R."/>
            <person name="Plunkett G. III"/>
            <person name="Bloch C.A."/>
            <person name="Perna N.T."/>
            <person name="Burland V."/>
            <person name="Riley M."/>
            <person name="Collado-Vides J."/>
            <person name="Glasner J.D."/>
            <person name="Rode C.K."/>
            <person name="Mayhew G.F."/>
            <person name="Gregor J."/>
            <person name="Davis N.W."/>
            <person name="Kirkpatrick H.A."/>
            <person name="Goeden M.A."/>
            <person name="Rose D.J."/>
            <person name="Mau B."/>
            <person name="Shao Y."/>
        </authorList>
    </citation>
    <scope>NUCLEOTIDE SEQUENCE [LARGE SCALE GENOMIC DNA]</scope>
    <source>
        <strain>K12 / MG1655 / ATCC 47076</strain>
    </source>
</reference>
<reference key="4">
    <citation type="journal article" date="2006" name="Mol. Syst. Biol.">
        <title>Highly accurate genome sequences of Escherichia coli K-12 strains MG1655 and W3110.</title>
        <authorList>
            <person name="Hayashi K."/>
            <person name="Morooka N."/>
            <person name="Yamamoto Y."/>
            <person name="Fujita K."/>
            <person name="Isono K."/>
            <person name="Choi S."/>
            <person name="Ohtsubo E."/>
            <person name="Baba T."/>
            <person name="Wanner B.L."/>
            <person name="Mori H."/>
            <person name="Horiuchi T."/>
        </authorList>
    </citation>
    <scope>NUCLEOTIDE SEQUENCE [LARGE SCALE GENOMIC DNA]</scope>
    <source>
        <strain>K12 / W3110 / ATCC 27325 / DSM 5911</strain>
    </source>
</reference>
<reference key="5">
    <citation type="journal article" date="1984" name="J. Bacteriol.">
        <title>Molecular cloning and characterization of genes required for ribose transport and utilization in Escherichia coli K-12.</title>
        <authorList>
            <person name="Iida A."/>
            <person name="Harayama S."/>
            <person name="Iino T."/>
            <person name="Hazelbauer G.L."/>
        </authorList>
    </citation>
    <scope>FUNCTION</scope>
</reference>
<reference key="6">
    <citation type="journal article" date="1999" name="J. Bacteriol.">
        <title>Topology of RbsC, a membrane component of the ribose transporter, belonging to the AraH superfamily.</title>
        <authorList>
            <person name="Park Y."/>
            <person name="Park C."/>
        </authorList>
    </citation>
    <scope>TOPOLOGY</scope>
    <scope>SUBCELLULAR LOCATION</scope>
</reference>
<reference key="7">
    <citation type="journal article" date="2005" name="Science">
        <title>Global topology analysis of the Escherichia coli inner membrane proteome.</title>
        <authorList>
            <person name="Daley D.O."/>
            <person name="Rapp M."/>
            <person name="Granseth E."/>
            <person name="Melen K."/>
            <person name="Drew D."/>
            <person name="von Heijne G."/>
        </authorList>
    </citation>
    <scope>TOPOLOGY [LARGE SCALE ANALYSIS]</scope>
    <scope>SUBCELLULAR LOCATION</scope>
    <source>
        <strain>K12 / MG1655 / ATCC 47076</strain>
    </source>
</reference>
<reference key="8">
    <citation type="journal article" date="2015" name="J. Biol. Chem.">
        <title>In vitro reassembly of the ribose ATP-binding cassette transporter reveals a distinct set of transport complexes.</title>
        <authorList>
            <person name="Clifton M.C."/>
            <person name="Simon M.J."/>
            <person name="Erramilli S.K."/>
            <person name="Zhang H."/>
            <person name="Zaitseva J."/>
            <person name="Hermodson M.A."/>
            <person name="Stauffacher C.V."/>
        </authorList>
    </citation>
    <scope>FUNCTION</scope>
    <scope>SUBUNIT</scope>
</reference>
<reference key="9">
    <citation type="journal article" date="2015" name="Proc. Natl. Acad. Sci. U.S.A.">
        <title>Contact-dependent growth inhibition toxins exploit multiple independent cell-entry pathways.</title>
        <authorList>
            <person name="Willett J.L."/>
            <person name="Gucinski G.C."/>
            <person name="Fatherree J.P."/>
            <person name="Low D.A."/>
            <person name="Hayes C.S."/>
        </authorList>
    </citation>
    <scope>RECEPTOR FOR CDI TOXIN ENTRY INTO TARGET CELL CYTOPLASM (MICROBIAL INFECTION)</scope>
    <scope>DISRUPTION PHENOTYPE</scope>
    <source>
        <strain>K12 / MC4100 / ATCC 35695 / DSM 6574</strain>
    </source>
</reference>